<organism>
    <name type="scientific">Tityus obscurus</name>
    <name type="common">Amazonian scorpion</name>
    <name type="synonym">Tityus cambridgei</name>
    <dbReference type="NCBI Taxonomy" id="1221240"/>
    <lineage>
        <taxon>Eukaryota</taxon>
        <taxon>Metazoa</taxon>
        <taxon>Ecdysozoa</taxon>
        <taxon>Arthropoda</taxon>
        <taxon>Chelicerata</taxon>
        <taxon>Arachnida</taxon>
        <taxon>Scorpiones</taxon>
        <taxon>Buthida</taxon>
        <taxon>Buthoidea</taxon>
        <taxon>Buthidae</taxon>
        <taxon>Tityus</taxon>
    </lineage>
</organism>
<keyword id="KW-0903">Direct protein sequencing</keyword>
<keyword id="KW-0964">Secreted</keyword>
<proteinExistence type="evidence at protein level"/>
<dbReference type="GO" id="GO:0005576">
    <property type="term" value="C:extracellular region"/>
    <property type="evidence" value="ECO:0007669"/>
    <property type="project" value="UniProtKB-SubCell"/>
</dbReference>
<protein>
    <recommendedName>
        <fullName evidence="2">Cryptide Pep-27</fullName>
    </recommendedName>
</protein>
<feature type="peptide" id="PRO_0000461762" description="Cryptide Pep-27" evidence="1">
    <location>
        <begin position="1"/>
        <end position="4"/>
    </location>
</feature>
<accession>P0DRH2</accession>
<reference key="1">
    <citation type="journal article" date="2018" name="J. Proteomics">
        <title>Profiling the short, linear, non-disulfide bond-containing peptidome from the venom of the scorpion Tityus obscurus.</title>
        <authorList>
            <person name="Dias N.B."/>
            <person name="de Souza B.M."/>
            <person name="Cocchi F.K."/>
            <person name="Chalkidis H.M."/>
            <person name="Dorce V.A.C."/>
            <person name="Palma M.S."/>
        </authorList>
    </citation>
    <scope>PROTEIN SEQUENCE</scope>
    <scope>IDENTIFICATION BY MASS SPECTROMETRY</scope>
    <scope>MASS SPECTROMETRY</scope>
    <scope>SUBCELLULAR LOCATION</scope>
    <source>
        <tissue>Venom</tissue>
    </source>
</reference>
<comment type="function">
    <text evidence="3">May act to induce hypotension.</text>
</comment>
<comment type="subcellular location">
    <subcellularLocation>
        <location evidence="1">Secreted</location>
    </subcellularLocation>
</comment>
<comment type="tissue specificity">
    <text evidence="3">Expressed by the venom gland.</text>
</comment>
<comment type="mass spectrometry" mass="411.24" method="Electrospray" evidence="1"/>
<name>CRY27_TITOB</name>
<sequence length="4" mass="412">KPPA</sequence>
<evidence type="ECO:0000269" key="1">
    <source>
    </source>
</evidence>
<evidence type="ECO:0000303" key="2">
    <source>
    </source>
</evidence>
<evidence type="ECO:0000305" key="3">
    <source>
    </source>
</evidence>